<protein>
    <recommendedName>
        <fullName evidence="1">Large ribosomal subunit protein uL18</fullName>
    </recommendedName>
    <alternativeName>
        <fullName evidence="3">50S ribosomal protein L18</fullName>
    </alternativeName>
</protein>
<feature type="chain" id="PRO_0000251379" description="Large ribosomal subunit protein uL18">
    <location>
        <begin position="1"/>
        <end position="121"/>
    </location>
</feature>
<feature type="region of interest" description="Disordered" evidence="2">
    <location>
        <begin position="1"/>
        <end position="25"/>
    </location>
</feature>
<feature type="compositionally biased region" description="Basic residues" evidence="2">
    <location>
        <begin position="13"/>
        <end position="23"/>
    </location>
</feature>
<accession>Q1JJ46</accession>
<gene>
    <name evidence="1" type="primary">rplR</name>
    <name type="ordered locus">MGAS10270_Spy0062</name>
</gene>
<organism>
    <name type="scientific">Streptococcus pyogenes serotype M2 (strain MGAS10270)</name>
    <dbReference type="NCBI Taxonomy" id="370552"/>
    <lineage>
        <taxon>Bacteria</taxon>
        <taxon>Bacillati</taxon>
        <taxon>Bacillota</taxon>
        <taxon>Bacilli</taxon>
        <taxon>Lactobacillales</taxon>
        <taxon>Streptococcaceae</taxon>
        <taxon>Streptococcus</taxon>
    </lineage>
</organism>
<sequence length="121" mass="13206">MKIVISKPDKNKIRQKRHRRVRGKLSGTADRPRLNVFRSNTGIYAQVIDDVAGVTLASASTLDKDVSKGTKTEQAVVVGKLVAERAVAKGISEVVFDRGGYLYHGRVKALADAARENGLKF</sequence>
<evidence type="ECO:0000255" key="1">
    <source>
        <dbReference type="HAMAP-Rule" id="MF_01337"/>
    </source>
</evidence>
<evidence type="ECO:0000256" key="2">
    <source>
        <dbReference type="SAM" id="MobiDB-lite"/>
    </source>
</evidence>
<evidence type="ECO:0000305" key="3"/>
<reference key="1">
    <citation type="journal article" date="2006" name="Proc. Natl. Acad. Sci. U.S.A.">
        <title>Molecular genetic anatomy of inter- and intraserotype variation in the human bacterial pathogen group A Streptococcus.</title>
        <authorList>
            <person name="Beres S.B."/>
            <person name="Richter E.W."/>
            <person name="Nagiec M.J."/>
            <person name="Sumby P."/>
            <person name="Porcella S.F."/>
            <person name="DeLeo F.R."/>
            <person name="Musser J.M."/>
        </authorList>
    </citation>
    <scope>NUCLEOTIDE SEQUENCE [LARGE SCALE GENOMIC DNA]</scope>
    <source>
        <strain>MGAS10270</strain>
    </source>
</reference>
<comment type="function">
    <text evidence="1">This is one of the proteins that bind and probably mediate the attachment of the 5S RNA into the large ribosomal subunit, where it forms part of the central protuberance.</text>
</comment>
<comment type="subunit">
    <text evidence="1">Part of the 50S ribosomal subunit; part of the 5S rRNA/L5/L18/L25 subcomplex. Contacts the 5S and 23S rRNAs.</text>
</comment>
<comment type="similarity">
    <text evidence="1">Belongs to the universal ribosomal protein uL18 family.</text>
</comment>
<name>RL18_STRPD</name>
<keyword id="KW-0687">Ribonucleoprotein</keyword>
<keyword id="KW-0689">Ribosomal protein</keyword>
<keyword id="KW-0694">RNA-binding</keyword>
<keyword id="KW-0699">rRNA-binding</keyword>
<dbReference type="EMBL" id="CP000260">
    <property type="protein sequence ID" value="ABF33127.1"/>
    <property type="molecule type" value="Genomic_DNA"/>
</dbReference>
<dbReference type="SMR" id="Q1JJ46"/>
<dbReference type="KEGG" id="sph:MGAS10270_Spy0062"/>
<dbReference type="HOGENOM" id="CLU_098841_0_1_9"/>
<dbReference type="Proteomes" id="UP000002436">
    <property type="component" value="Chromosome"/>
</dbReference>
<dbReference type="GO" id="GO:0022625">
    <property type="term" value="C:cytosolic large ribosomal subunit"/>
    <property type="evidence" value="ECO:0007669"/>
    <property type="project" value="TreeGrafter"/>
</dbReference>
<dbReference type="GO" id="GO:0008097">
    <property type="term" value="F:5S rRNA binding"/>
    <property type="evidence" value="ECO:0007669"/>
    <property type="project" value="TreeGrafter"/>
</dbReference>
<dbReference type="GO" id="GO:0003735">
    <property type="term" value="F:structural constituent of ribosome"/>
    <property type="evidence" value="ECO:0007669"/>
    <property type="project" value="InterPro"/>
</dbReference>
<dbReference type="GO" id="GO:0006412">
    <property type="term" value="P:translation"/>
    <property type="evidence" value="ECO:0007669"/>
    <property type="project" value="UniProtKB-UniRule"/>
</dbReference>
<dbReference type="CDD" id="cd00432">
    <property type="entry name" value="Ribosomal_L18_L5e"/>
    <property type="match status" value="1"/>
</dbReference>
<dbReference type="FunFam" id="3.30.420.100:FF:000001">
    <property type="entry name" value="50S ribosomal protein L18"/>
    <property type="match status" value="1"/>
</dbReference>
<dbReference type="Gene3D" id="3.30.420.100">
    <property type="match status" value="1"/>
</dbReference>
<dbReference type="HAMAP" id="MF_01337_B">
    <property type="entry name" value="Ribosomal_uL18_B"/>
    <property type="match status" value="1"/>
</dbReference>
<dbReference type="InterPro" id="IPR004389">
    <property type="entry name" value="Ribosomal_uL18_bac-type"/>
</dbReference>
<dbReference type="InterPro" id="IPR005484">
    <property type="entry name" value="Ribosomal_uL18_bac/euk"/>
</dbReference>
<dbReference type="NCBIfam" id="TIGR00060">
    <property type="entry name" value="L18_bact"/>
    <property type="match status" value="1"/>
</dbReference>
<dbReference type="PANTHER" id="PTHR12899">
    <property type="entry name" value="39S RIBOSOMAL PROTEIN L18, MITOCHONDRIAL"/>
    <property type="match status" value="1"/>
</dbReference>
<dbReference type="PANTHER" id="PTHR12899:SF3">
    <property type="entry name" value="LARGE RIBOSOMAL SUBUNIT PROTEIN UL18M"/>
    <property type="match status" value="1"/>
</dbReference>
<dbReference type="Pfam" id="PF00861">
    <property type="entry name" value="Ribosomal_L18p"/>
    <property type="match status" value="1"/>
</dbReference>
<dbReference type="SUPFAM" id="SSF53137">
    <property type="entry name" value="Translational machinery components"/>
    <property type="match status" value="1"/>
</dbReference>
<proteinExistence type="inferred from homology"/>